<accession>P0DQZ4</accession>
<comment type="function">
    <molecule>Mastoparan-VT1</molecule>
    <text evidence="1 2 3 5">Antimicrobial peptide with activities against Gram-negative and Gram-positive bacteria and the fungi C.albicans and C.parapsilosis (PubMed:24012601). Exhibits little hemolytic activity against washed human erythrocytes (PubMed:24012601). Also acts as a mast cell degranulating peptide (By similarity). Its mast cell degranulation activity may be related to the activation of G-protein coupled receptors in mast cells as well as interaction with other proteins located in cell endosomal membranes in the mast cells (By similarity).</text>
</comment>
<comment type="function">
    <molecule>Mastoparan-VT2</molecule>
    <text evidence="1 5">Antimicrobial peptide with activities against Gram-negative and Gram-positive bacteria and the fungi C.albicans and C.parapsilosis (PubMed:24012601). Exhibits little hemolytic activity against washed human erythrocytes (PubMed:24012601). Also acts as a mast cell degranulating peptide (By similarity).</text>
</comment>
<comment type="subcellular location">
    <subcellularLocation>
        <location evidence="5">Secreted</location>
    </subcellularLocation>
</comment>
<comment type="tissue specificity">
    <text evidence="8">Expressed by the venom gland.</text>
</comment>
<comment type="mass spectrometry" mass="1480.2" method="MALDI" evidence="5">
    <molecule>Mastoparan-VT1</molecule>
    <text>Average mass.</text>
</comment>
<comment type="mass spectrometry" mass="1365.9" method="MALDI" evidence="5">
    <molecule>Mastoparan-VT2</molecule>
    <text>Average mass.</text>
</comment>
<comment type="miscellaneous">
    <molecule>Mastoparan-VT1</molecule>
    <text evidence="7">The primary structure of this mature peptide is identical to that of mastoparan-M from Vespa mandarinia (AC P04205) and mastoparan-like peptide 12c from Vespa magnifica (AC A0SPI0).</text>
</comment>
<comment type="similarity">
    <text evidence="7">Belongs to the MCD family. Mastoparan subfamily.</text>
</comment>
<reference key="1">
    <citation type="journal article" date="2013" name="Toxicon">
        <title>Antimicrobial peptides from the venom gland of the social wasp Vespa tropica.</title>
        <authorList>
            <person name="Yang X."/>
            <person name="Wang Y."/>
            <person name="Lee W.H."/>
            <person name="Zhang Y."/>
        </authorList>
    </citation>
    <scope>NUCLEOTIDE SEQUENCE [MRNA]</scope>
    <scope>PROTEIN SEQUENCE OF 46-59</scope>
    <scope>FUNCTION</scope>
    <scope>MASS SPECTROMETRY</scope>
    <scope>AMIDATION AT LEU-59</scope>
    <scope>SUBCELLULAR LOCATION</scope>
    <source>
        <tissue>Venom</tissue>
        <tissue>Venom gland</tissue>
    </source>
</reference>
<proteinExistence type="evidence at protein level"/>
<dbReference type="SMR" id="P0DQZ4"/>
<dbReference type="GO" id="GO:0005576">
    <property type="term" value="C:extracellular region"/>
    <property type="evidence" value="ECO:0007669"/>
    <property type="project" value="UniProtKB-SubCell"/>
</dbReference>
<dbReference type="GO" id="GO:0090729">
    <property type="term" value="F:toxin activity"/>
    <property type="evidence" value="ECO:0007669"/>
    <property type="project" value="UniProtKB-KW"/>
</dbReference>
<dbReference type="GO" id="GO:0042742">
    <property type="term" value="P:defense response to bacterium"/>
    <property type="evidence" value="ECO:0007669"/>
    <property type="project" value="UniProtKB-KW"/>
</dbReference>
<dbReference type="GO" id="GO:0050832">
    <property type="term" value="P:defense response to fungus"/>
    <property type="evidence" value="ECO:0007669"/>
    <property type="project" value="UniProtKB-KW"/>
</dbReference>
<dbReference type="GO" id="GO:0045087">
    <property type="term" value="P:innate immune response"/>
    <property type="evidence" value="ECO:0007669"/>
    <property type="project" value="UniProtKB-KW"/>
</dbReference>
<dbReference type="GO" id="GO:0031640">
    <property type="term" value="P:killing of cells of another organism"/>
    <property type="evidence" value="ECO:0007669"/>
    <property type="project" value="UniProtKB-KW"/>
</dbReference>
<sequence length="60" mass="6211">MKNTILILFTAFIALLGFFGMSAEALADLKADPLAGPNPDADPEAINLKAIAALAKKLLG</sequence>
<evidence type="ECO:0000250" key="1">
    <source>
        <dbReference type="UniProtKB" id="A0SPI0"/>
    </source>
</evidence>
<evidence type="ECO:0000250" key="2">
    <source>
        <dbReference type="UniProtKB" id="P01514"/>
    </source>
</evidence>
<evidence type="ECO:0000250" key="3">
    <source>
        <dbReference type="UniProtKB" id="P84914"/>
    </source>
</evidence>
<evidence type="ECO:0000255" key="4"/>
<evidence type="ECO:0000269" key="5">
    <source>
    </source>
</evidence>
<evidence type="ECO:0000303" key="6">
    <source>
    </source>
</evidence>
<evidence type="ECO:0000305" key="7"/>
<evidence type="ECO:0000305" key="8">
    <source>
    </source>
</evidence>
<name>MAST1_VESTR</name>
<keyword id="KW-0027">Amidation</keyword>
<keyword id="KW-0044">Antibiotic</keyword>
<keyword id="KW-0929">Antimicrobial</keyword>
<keyword id="KW-0903">Direct protein sequencing</keyword>
<keyword id="KW-0295">Fungicide</keyword>
<keyword id="KW-1213">G-protein coupled receptor impairing toxin</keyword>
<keyword id="KW-0391">Immunity</keyword>
<keyword id="KW-0399">Innate immunity</keyword>
<keyword id="KW-0677">Repeat</keyword>
<keyword id="KW-0964">Secreted</keyword>
<keyword id="KW-0732">Signal</keyword>
<keyword id="KW-0800">Toxin</keyword>
<protein>
    <recommendedName>
        <fullName evidence="6">Mastoparan-VT1</fullName>
    </recommendedName>
    <component>
        <recommendedName>
            <fullName evidence="6">Mastoparan-VT2</fullName>
        </recommendedName>
    </component>
</protein>
<feature type="signal peptide" evidence="4">
    <location>
        <begin position="1"/>
        <end position="25"/>
    </location>
</feature>
<feature type="propeptide" id="PRO_0000458784" evidence="8">
    <location>
        <begin position="26"/>
        <end position="45"/>
    </location>
</feature>
<feature type="peptide" id="PRO_0000458785" description="Mastoparan-VT1" evidence="5">
    <location>
        <begin position="46"/>
        <end position="59"/>
    </location>
</feature>
<feature type="peptide" id="PRO_0000458786" description="Mastoparan-VT2" evidence="5">
    <location>
        <begin position="47"/>
        <end position="59"/>
    </location>
</feature>
<feature type="repeat" description="AXPX 1" evidence="7">
    <location>
        <begin position="31"/>
        <end position="34"/>
    </location>
</feature>
<feature type="repeat" description="AXPX 2" evidence="7">
    <location>
        <begin position="35"/>
        <end position="38"/>
    </location>
</feature>
<feature type="repeat" description="AXPX 3" evidence="7">
    <location>
        <begin position="41"/>
        <end position="44"/>
    </location>
</feature>
<feature type="modified residue" description="Leucine amide" evidence="5">
    <location>
        <position position="59"/>
    </location>
</feature>
<organism>
    <name type="scientific">Vespa tropica</name>
    <name type="common">Greater banded hornet</name>
    <name type="synonym">Sphex tropica</name>
    <dbReference type="NCBI Taxonomy" id="7450"/>
    <lineage>
        <taxon>Eukaryota</taxon>
        <taxon>Metazoa</taxon>
        <taxon>Ecdysozoa</taxon>
        <taxon>Arthropoda</taxon>
        <taxon>Hexapoda</taxon>
        <taxon>Insecta</taxon>
        <taxon>Pterygota</taxon>
        <taxon>Neoptera</taxon>
        <taxon>Endopterygota</taxon>
        <taxon>Hymenoptera</taxon>
        <taxon>Apocrita</taxon>
        <taxon>Aculeata</taxon>
        <taxon>Vespoidea</taxon>
        <taxon>Vespidae</taxon>
        <taxon>Vespinae</taxon>
        <taxon>Vespa</taxon>
    </lineage>
</organism>